<comment type="function">
    <text evidence="1">Binds to DNA and alters its conformation. May be involved in regulation of gene expression, nucleoid organization and DNA protection.</text>
</comment>
<comment type="subunit">
    <text evidence="1">Homodimer.</text>
</comment>
<comment type="subcellular location">
    <subcellularLocation>
        <location evidence="1">Cytoplasm</location>
        <location evidence="1">Nucleoid</location>
    </subcellularLocation>
</comment>
<comment type="similarity">
    <text evidence="1">Belongs to the YbaB/EbfC family.</text>
</comment>
<organism>
    <name type="scientific">Azotobacter vinelandii (strain DJ / ATCC BAA-1303)</name>
    <dbReference type="NCBI Taxonomy" id="322710"/>
    <lineage>
        <taxon>Bacteria</taxon>
        <taxon>Pseudomonadati</taxon>
        <taxon>Pseudomonadota</taxon>
        <taxon>Gammaproteobacteria</taxon>
        <taxon>Pseudomonadales</taxon>
        <taxon>Pseudomonadaceae</taxon>
        <taxon>Azotobacter</taxon>
    </lineage>
</organism>
<dbReference type="EMBL" id="CP001157">
    <property type="protein sequence ID" value="ACO78192.1"/>
    <property type="molecule type" value="Genomic_DNA"/>
</dbReference>
<dbReference type="RefSeq" id="WP_012700601.1">
    <property type="nucleotide sequence ID" value="NC_012560.1"/>
</dbReference>
<dbReference type="SMR" id="C1DEK7"/>
<dbReference type="STRING" id="322710.Avin_19840"/>
<dbReference type="EnsemblBacteria" id="ACO78192">
    <property type="protein sequence ID" value="ACO78192"/>
    <property type="gene ID" value="Avin_19840"/>
</dbReference>
<dbReference type="GeneID" id="88185222"/>
<dbReference type="KEGG" id="avn:Avin_19840"/>
<dbReference type="eggNOG" id="COG0718">
    <property type="taxonomic scope" value="Bacteria"/>
</dbReference>
<dbReference type="HOGENOM" id="CLU_140930_0_0_6"/>
<dbReference type="OrthoDB" id="9808738at2"/>
<dbReference type="Proteomes" id="UP000002424">
    <property type="component" value="Chromosome"/>
</dbReference>
<dbReference type="GO" id="GO:0043590">
    <property type="term" value="C:bacterial nucleoid"/>
    <property type="evidence" value="ECO:0007669"/>
    <property type="project" value="UniProtKB-UniRule"/>
</dbReference>
<dbReference type="GO" id="GO:0005829">
    <property type="term" value="C:cytosol"/>
    <property type="evidence" value="ECO:0007669"/>
    <property type="project" value="TreeGrafter"/>
</dbReference>
<dbReference type="GO" id="GO:0003677">
    <property type="term" value="F:DNA binding"/>
    <property type="evidence" value="ECO:0007669"/>
    <property type="project" value="UniProtKB-UniRule"/>
</dbReference>
<dbReference type="FunFam" id="3.30.1310.10:FF:000001">
    <property type="entry name" value="Nucleoid-associated protein YbaB"/>
    <property type="match status" value="1"/>
</dbReference>
<dbReference type="Gene3D" id="3.30.1310.10">
    <property type="entry name" value="Nucleoid-associated protein YbaB-like domain"/>
    <property type="match status" value="1"/>
</dbReference>
<dbReference type="HAMAP" id="MF_00274">
    <property type="entry name" value="DNA_YbaB_EbfC"/>
    <property type="match status" value="1"/>
</dbReference>
<dbReference type="InterPro" id="IPR036894">
    <property type="entry name" value="YbaB-like_sf"/>
</dbReference>
<dbReference type="InterPro" id="IPR004401">
    <property type="entry name" value="YbaB/EbfC"/>
</dbReference>
<dbReference type="NCBIfam" id="TIGR00103">
    <property type="entry name" value="DNA_YbaB_EbfC"/>
    <property type="match status" value="1"/>
</dbReference>
<dbReference type="PANTHER" id="PTHR33449">
    <property type="entry name" value="NUCLEOID-ASSOCIATED PROTEIN YBAB"/>
    <property type="match status" value="1"/>
</dbReference>
<dbReference type="PANTHER" id="PTHR33449:SF1">
    <property type="entry name" value="NUCLEOID-ASSOCIATED PROTEIN YBAB"/>
    <property type="match status" value="1"/>
</dbReference>
<dbReference type="Pfam" id="PF02575">
    <property type="entry name" value="YbaB_DNA_bd"/>
    <property type="match status" value="1"/>
</dbReference>
<dbReference type="PIRSF" id="PIRSF004555">
    <property type="entry name" value="UCP004555"/>
    <property type="match status" value="1"/>
</dbReference>
<dbReference type="SUPFAM" id="SSF82607">
    <property type="entry name" value="YbaB-like"/>
    <property type="match status" value="1"/>
</dbReference>
<evidence type="ECO:0000255" key="1">
    <source>
        <dbReference type="HAMAP-Rule" id="MF_00274"/>
    </source>
</evidence>
<reference key="1">
    <citation type="journal article" date="2009" name="J. Bacteriol.">
        <title>Genome sequence of Azotobacter vinelandii, an obligate aerobe specialized to support diverse anaerobic metabolic processes.</title>
        <authorList>
            <person name="Setubal J.C."/>
            <person name="Dos Santos P."/>
            <person name="Goldman B.S."/>
            <person name="Ertesvaag H."/>
            <person name="Espin G."/>
            <person name="Rubio L.M."/>
            <person name="Valla S."/>
            <person name="Almeida N.F."/>
            <person name="Balasubramanian D."/>
            <person name="Cromes L."/>
            <person name="Curatti L."/>
            <person name="Du Z."/>
            <person name="Godsy E."/>
            <person name="Goodner B."/>
            <person name="Hellner-Burris K."/>
            <person name="Hernandez J.A."/>
            <person name="Houmiel K."/>
            <person name="Imperial J."/>
            <person name="Kennedy C."/>
            <person name="Larson T.J."/>
            <person name="Latreille P."/>
            <person name="Ligon L.S."/>
            <person name="Lu J."/>
            <person name="Maerk M."/>
            <person name="Miller N.M."/>
            <person name="Norton S."/>
            <person name="O'Carroll I.P."/>
            <person name="Paulsen I."/>
            <person name="Raulfs E.C."/>
            <person name="Roemer R."/>
            <person name="Rosser J."/>
            <person name="Segura D."/>
            <person name="Slater S."/>
            <person name="Stricklin S.L."/>
            <person name="Studholme D.J."/>
            <person name="Sun J."/>
            <person name="Viana C.J."/>
            <person name="Wallin E."/>
            <person name="Wang B."/>
            <person name="Wheeler C."/>
            <person name="Zhu H."/>
            <person name="Dean D.R."/>
            <person name="Dixon R."/>
            <person name="Wood D."/>
        </authorList>
    </citation>
    <scope>NUCLEOTIDE SEQUENCE [LARGE SCALE GENOMIC DNA]</scope>
    <source>
        <strain>DJ / ATCC BAA-1303</strain>
    </source>
</reference>
<sequence>MMKGGMAGLMKQAQLMQEKMQKLQEEIANAEVTGQSGAGLVSVVMTGRHDVRRVTLDDSLMQEDKEVLEDLIAAAVNDAVRKIEQNNQEKMAGMTAGMGLPPGFKMPF</sequence>
<gene>
    <name type="ordered locus">Avin_19840</name>
</gene>
<proteinExistence type="inferred from homology"/>
<protein>
    <recommendedName>
        <fullName evidence="1">Nucleoid-associated protein Avin_19840</fullName>
    </recommendedName>
</protein>
<accession>C1DEK7</accession>
<name>Y1984_AZOVD</name>
<keyword id="KW-0963">Cytoplasm</keyword>
<keyword id="KW-0238">DNA-binding</keyword>
<feature type="chain" id="PRO_1000204763" description="Nucleoid-associated protein Avin_19840">
    <location>
        <begin position="1"/>
        <end position="108"/>
    </location>
</feature>